<accession>C3MJX7</accession>
<keyword id="KW-1003">Cell membrane</keyword>
<keyword id="KW-0169">Cobalamin biosynthesis</keyword>
<keyword id="KW-0460">Magnesium</keyword>
<keyword id="KW-0472">Membrane</keyword>
<keyword id="KW-0808">Transferase</keyword>
<keyword id="KW-0812">Transmembrane</keyword>
<keyword id="KW-1133">Transmembrane helix</keyword>
<feature type="chain" id="PRO_1000212698" description="Adenosylcobinamide-GDP ribazoletransferase">
    <location>
        <begin position="1"/>
        <end position="253"/>
    </location>
</feature>
<feature type="transmembrane region" description="Helical" evidence="1">
    <location>
        <begin position="33"/>
        <end position="53"/>
    </location>
</feature>
<feature type="transmembrane region" description="Helical" evidence="1">
    <location>
        <begin position="106"/>
        <end position="126"/>
    </location>
</feature>
<feature type="transmembrane region" description="Helical" evidence="1">
    <location>
        <begin position="132"/>
        <end position="152"/>
    </location>
</feature>
<feature type="transmembrane region" description="Helical" evidence="1">
    <location>
        <begin position="178"/>
        <end position="198"/>
    </location>
</feature>
<sequence>MRLKGVLALFSFFTAIPIKSNASLEEIAEYSYISPLIIGISLALIESAVYVLLYRILEALAGIVLLGVVELLRGFNHLDGLLDLGDALMIKGDRERKIKALKDVEIGSGGIGLLLVYLSIQIVALLKLGFSFYTIFHLISSNVLSMTIGLYILSTISPIPESNLGKIFHNKLKGKSTVLLLELIPFISLYNIIVFLVFYMIMHKICRSLGGSSGDIAGASITLSFPLFLLTNEITNLNYSLLSILCYLFLHLH</sequence>
<protein>
    <recommendedName>
        <fullName evidence="1">Adenosylcobinamide-GDP ribazoletransferase</fullName>
        <ecNumber evidence="1">2.7.8.26</ecNumber>
    </recommendedName>
    <alternativeName>
        <fullName evidence="1">Cobalamin synthase</fullName>
    </alternativeName>
    <alternativeName>
        <fullName evidence="1">Cobalamin-5'-phosphate synthase</fullName>
    </alternativeName>
</protein>
<evidence type="ECO:0000255" key="1">
    <source>
        <dbReference type="HAMAP-Rule" id="MF_00719"/>
    </source>
</evidence>
<name>COBS_SACI2</name>
<reference key="1">
    <citation type="journal article" date="2009" name="Proc. Natl. Acad. Sci. U.S.A.">
        <title>Biogeography of the Sulfolobus islandicus pan-genome.</title>
        <authorList>
            <person name="Reno M.L."/>
            <person name="Held N.L."/>
            <person name="Fields C.J."/>
            <person name="Burke P.V."/>
            <person name="Whitaker R.J."/>
        </authorList>
    </citation>
    <scope>NUCLEOTIDE SEQUENCE [LARGE SCALE GENOMIC DNA]</scope>
    <source>
        <strain>L.S.2.15 / Lassen #1</strain>
    </source>
</reference>
<dbReference type="EC" id="2.7.8.26" evidence="1"/>
<dbReference type="EMBL" id="CP001399">
    <property type="protein sequence ID" value="ACP36280.1"/>
    <property type="molecule type" value="Genomic_DNA"/>
</dbReference>
<dbReference type="RefSeq" id="WP_012714214.1">
    <property type="nucleotide sequence ID" value="NC_012589.1"/>
</dbReference>
<dbReference type="GeneID" id="7806594"/>
<dbReference type="GeneID" id="7809007"/>
<dbReference type="KEGG" id="sis:LS215_2295"/>
<dbReference type="HOGENOM" id="CLU_057426_2_0_2"/>
<dbReference type="OrthoDB" id="37064at2157"/>
<dbReference type="UniPathway" id="UPA00148">
    <property type="reaction ID" value="UER00238"/>
</dbReference>
<dbReference type="Proteomes" id="UP000001747">
    <property type="component" value="Chromosome"/>
</dbReference>
<dbReference type="GO" id="GO:0005886">
    <property type="term" value="C:plasma membrane"/>
    <property type="evidence" value="ECO:0007669"/>
    <property type="project" value="UniProtKB-SubCell"/>
</dbReference>
<dbReference type="GO" id="GO:0051073">
    <property type="term" value="F:adenosylcobinamide-GDP ribazoletransferase activity"/>
    <property type="evidence" value="ECO:0007669"/>
    <property type="project" value="UniProtKB-UniRule"/>
</dbReference>
<dbReference type="GO" id="GO:0008818">
    <property type="term" value="F:cobalamin 5'-phosphate synthase activity"/>
    <property type="evidence" value="ECO:0007669"/>
    <property type="project" value="UniProtKB-UniRule"/>
</dbReference>
<dbReference type="GO" id="GO:0009236">
    <property type="term" value="P:cobalamin biosynthetic process"/>
    <property type="evidence" value="ECO:0007669"/>
    <property type="project" value="UniProtKB-UniRule"/>
</dbReference>
<dbReference type="HAMAP" id="MF_00719">
    <property type="entry name" value="CobS"/>
    <property type="match status" value="1"/>
</dbReference>
<dbReference type="InterPro" id="IPR003805">
    <property type="entry name" value="CobS"/>
</dbReference>
<dbReference type="NCBIfam" id="TIGR00317">
    <property type="entry name" value="cobS"/>
    <property type="match status" value="1"/>
</dbReference>
<dbReference type="PANTHER" id="PTHR34148">
    <property type="entry name" value="ADENOSYLCOBINAMIDE-GDP RIBAZOLETRANSFERASE"/>
    <property type="match status" value="1"/>
</dbReference>
<dbReference type="PANTHER" id="PTHR34148:SF1">
    <property type="entry name" value="ADENOSYLCOBINAMIDE-GDP RIBAZOLETRANSFERASE"/>
    <property type="match status" value="1"/>
</dbReference>
<dbReference type="Pfam" id="PF02654">
    <property type="entry name" value="CobS"/>
    <property type="match status" value="1"/>
</dbReference>
<gene>
    <name evidence="1" type="primary">cobS</name>
    <name type="ordered locus">LS215_2295</name>
</gene>
<organism>
    <name type="scientific">Saccharolobus islandicus (strain L.S.2.15 / Lassen #1)</name>
    <name type="common">Sulfolobus islandicus</name>
    <dbReference type="NCBI Taxonomy" id="429572"/>
    <lineage>
        <taxon>Archaea</taxon>
        <taxon>Thermoproteota</taxon>
        <taxon>Thermoprotei</taxon>
        <taxon>Sulfolobales</taxon>
        <taxon>Sulfolobaceae</taxon>
        <taxon>Saccharolobus</taxon>
    </lineage>
</organism>
<proteinExistence type="inferred from homology"/>
<comment type="function">
    <text evidence="1">Joins adenosylcobinamide-GDP and alpha-ribazole to generate adenosylcobalamin (Ado-cobalamin). Also synthesizes adenosylcobalamin 5'-phosphate from adenosylcobinamide-GDP and alpha-ribazole 5'-phosphate.</text>
</comment>
<comment type="catalytic activity">
    <reaction evidence="1">
        <text>alpha-ribazole + adenosylcob(III)inamide-GDP = adenosylcob(III)alamin + GMP + H(+)</text>
        <dbReference type="Rhea" id="RHEA:16049"/>
        <dbReference type="ChEBI" id="CHEBI:10329"/>
        <dbReference type="ChEBI" id="CHEBI:15378"/>
        <dbReference type="ChEBI" id="CHEBI:18408"/>
        <dbReference type="ChEBI" id="CHEBI:58115"/>
        <dbReference type="ChEBI" id="CHEBI:60487"/>
        <dbReference type="EC" id="2.7.8.26"/>
    </reaction>
</comment>
<comment type="catalytic activity">
    <reaction evidence="1">
        <text>alpha-ribazole 5'-phosphate + adenosylcob(III)inamide-GDP = adenosylcob(III)alamin 5'-phosphate + GMP + H(+)</text>
        <dbReference type="Rhea" id="RHEA:23560"/>
        <dbReference type="ChEBI" id="CHEBI:15378"/>
        <dbReference type="ChEBI" id="CHEBI:57918"/>
        <dbReference type="ChEBI" id="CHEBI:58115"/>
        <dbReference type="ChEBI" id="CHEBI:60487"/>
        <dbReference type="ChEBI" id="CHEBI:60493"/>
        <dbReference type="EC" id="2.7.8.26"/>
    </reaction>
</comment>
<comment type="cofactor">
    <cofactor evidence="1">
        <name>Mg(2+)</name>
        <dbReference type="ChEBI" id="CHEBI:18420"/>
    </cofactor>
</comment>
<comment type="pathway">
    <text evidence="1">Cofactor biosynthesis; adenosylcobalamin biosynthesis; adenosylcobalamin from cob(II)yrinate a,c-diamide: step 7/7.</text>
</comment>
<comment type="subcellular location">
    <subcellularLocation>
        <location evidence="1">Cell membrane</location>
        <topology evidence="1">Multi-pass membrane protein</topology>
    </subcellularLocation>
</comment>
<comment type="similarity">
    <text evidence="1">Belongs to the CobS family.</text>
</comment>